<comment type="function">
    <text evidence="1 5 6">Non-catalytic subunit of the V1 complex of vacuolar(H+)-ATPase (V-ATPase), a multisubunit enzyme composed of a peripheral complex (V1) that hydrolyzes ATP and a membrane integral complex (V0) that translocates protons (PubMed:16174750, PubMed:23028982). V-ATPase is responsible for acidifying and maintaining the pH of intracellular compartments and in some cell types, is targeted to the plasma membrane, where it is responsible for acidifying the extracellular environment (By similarity). Essential for the proper assembly and activity of V-ATPase (By similarity). In renal intercalated cells, mediates secretion of protons (H+) into the urine thereby ensuring correct urinary acidification (PubMed:16174750). Required for optimal olfactory function by mediating the acidification of the nasal olfactory epithelium (PubMed:23028982).</text>
</comment>
<comment type="subunit">
    <text evidence="1 2">V-ATPase is a heteromultimeric enzyme made up of two complexes: the ATP-hydrolytic V1 complex and the proton translocation V0 complex (By similarity). The V1 complex consists of three catalytic AB heterodimers that form a heterohexamer, three peripheral stalks each consisting of EG heterodimers, one central rotor including subunits D and F, and the regulatory subunits C and H (By similarity). The proton translocation complex V0 consists of the proton transport subunit a, a ring of proteolipid subunits c9c'', rotary subunit d, subunits e and f, and the accessory subunits ATP6AP1/Ac45 and ATP6AP2/PRR (By similarity). Forms a complex with NHERF1 and SCL4A7 (By similarity).</text>
</comment>
<comment type="subcellular location">
    <subcellularLocation>
        <location evidence="6 7">Apical cell membrane</location>
    </subcellularLocation>
    <subcellularLocation>
        <location evidence="6">Basolateral cell membrane</location>
    </subcellularLocation>
</comment>
<comment type="tissue specificity">
    <text evidence="4 6 7">Highly expressed in the kidney; found in early distal nephron, encompassing thick ascending limbs and distal convoluted tubules and in the alpha-intercalated cells of the cortical collecting ducts (at protein level) (PubMed:14585495, PubMed:29993276). Expressed in the olfactory epithelium (at protein level) (PubMed:23028982). Expressed at lower levels in the testis (PubMed:14585495).</text>
</comment>
<comment type="domain">
    <text evidence="1">The PDZ-binding motif mediates interactions with NHERF1 and SCL4A7.</text>
</comment>
<comment type="disruption phenotype">
    <text evidence="5 6">Mice show a higher urinary pH and a more severe metabolic acidosis after oral acid challenge in comparison to wild-type littermates (PubMed:16174750). Mice show diminished innate avoidance behavior (revealed as a decrease in freezing time and an increase in the number of sniffs in the presence of trimethyl-thiazoline) and diminished innate appetitive behavior (a decrease in time spent investigating the urine of the opposite sex) (PubMed:23028982).</text>
</comment>
<comment type="similarity">
    <text evidence="8">Belongs to the ATPase alpha/beta chains family.</text>
</comment>
<proteinExistence type="evidence at protein level"/>
<protein>
    <recommendedName>
        <fullName>V-type proton ATPase subunit B, kidney isoform</fullName>
        <shortName>V-ATPase subunit B 1</shortName>
    </recommendedName>
    <alternativeName>
        <fullName>Endomembrane proton pump 58 kDa subunit</fullName>
    </alternativeName>
    <alternativeName>
        <fullName>Vacuolar proton pump subunit B 1</fullName>
    </alternativeName>
</protein>
<gene>
    <name type="primary">Atp6v1b1</name>
    <name type="synonym">Atp6b1</name>
</gene>
<dbReference type="EMBL" id="AF435091">
    <property type="protein sequence ID" value="AAN45856.1"/>
    <property type="molecule type" value="mRNA"/>
</dbReference>
<dbReference type="EMBL" id="AK052604">
    <property type="protein sequence ID" value="BAC35059.1"/>
    <property type="molecule type" value="mRNA"/>
</dbReference>
<dbReference type="EMBL" id="AK052707">
    <property type="protein sequence ID" value="BAC35108.1"/>
    <property type="molecule type" value="mRNA"/>
</dbReference>
<dbReference type="EMBL" id="AK078810">
    <property type="protein sequence ID" value="BAC37404.1"/>
    <property type="molecule type" value="mRNA"/>
</dbReference>
<dbReference type="EMBL" id="AK168980">
    <property type="protein sequence ID" value="BAE40781.1"/>
    <property type="molecule type" value="mRNA"/>
</dbReference>
<dbReference type="EMBL" id="AK085549">
    <property type="protein sequence ID" value="BAC39470.1"/>
    <property type="molecule type" value="mRNA"/>
</dbReference>
<dbReference type="EMBL" id="AC090647">
    <property type="status" value="NOT_ANNOTATED_CDS"/>
    <property type="molecule type" value="Genomic_DNA"/>
</dbReference>
<dbReference type="EMBL" id="BC017127">
    <property type="protein sequence ID" value="AAH17127.1"/>
    <property type="molecule type" value="mRNA"/>
</dbReference>
<dbReference type="EMBL" id="BC062202">
    <property type="protein sequence ID" value="AAH62202.1"/>
    <property type="molecule type" value="mRNA"/>
</dbReference>
<dbReference type="CCDS" id="CCDS20283.1"/>
<dbReference type="RefSeq" id="NP_598918.1">
    <property type="nucleotide sequence ID" value="NM_134157.3"/>
</dbReference>
<dbReference type="SMR" id="Q91YH6"/>
<dbReference type="FunCoup" id="Q91YH6">
    <property type="interactions" value="490"/>
</dbReference>
<dbReference type="IntAct" id="Q91YH6">
    <property type="interactions" value="2"/>
</dbReference>
<dbReference type="MINT" id="Q91YH6"/>
<dbReference type="STRING" id="10090.ENSMUSP00000006431"/>
<dbReference type="TCDB" id="3.A.2.2.6">
    <property type="family name" value="the h+- or na+-translocating f-type, v-type and a-type atpase (f-atpase) superfamily"/>
</dbReference>
<dbReference type="iPTMnet" id="Q91YH6"/>
<dbReference type="PhosphoSitePlus" id="Q91YH6"/>
<dbReference type="jPOST" id="Q91YH6"/>
<dbReference type="PaxDb" id="10090-ENSMUSP00000006431"/>
<dbReference type="ProteomicsDB" id="331224"/>
<dbReference type="Antibodypedia" id="4020">
    <property type="antibodies" value="380 antibodies from 30 providers"/>
</dbReference>
<dbReference type="DNASU" id="110935"/>
<dbReference type="Ensembl" id="ENSMUST00000006431.8">
    <property type="protein sequence ID" value="ENSMUSP00000006431.7"/>
    <property type="gene ID" value="ENSMUSG00000006269.8"/>
</dbReference>
<dbReference type="GeneID" id="110935"/>
<dbReference type="KEGG" id="mmu:110935"/>
<dbReference type="UCSC" id="uc009coc.1">
    <property type="organism name" value="mouse"/>
</dbReference>
<dbReference type="AGR" id="MGI:103285"/>
<dbReference type="CTD" id="525"/>
<dbReference type="MGI" id="MGI:103285">
    <property type="gene designation" value="Atp6v1b1"/>
</dbReference>
<dbReference type="VEuPathDB" id="HostDB:ENSMUSG00000006269"/>
<dbReference type="eggNOG" id="KOG1351">
    <property type="taxonomic scope" value="Eukaryota"/>
</dbReference>
<dbReference type="GeneTree" id="ENSGT00940000161413"/>
<dbReference type="HOGENOM" id="CLU_022916_0_0_1"/>
<dbReference type="InParanoid" id="Q91YH6"/>
<dbReference type="OMA" id="YPRNYIR"/>
<dbReference type="OrthoDB" id="1735853at2759"/>
<dbReference type="PhylomeDB" id="Q91YH6"/>
<dbReference type="TreeFam" id="TF300313"/>
<dbReference type="Reactome" id="R-MMU-1222556">
    <property type="pathway name" value="ROS and RNS production in phagocytes"/>
</dbReference>
<dbReference type="Reactome" id="R-MMU-77387">
    <property type="pathway name" value="Insulin receptor recycling"/>
</dbReference>
<dbReference type="Reactome" id="R-MMU-917977">
    <property type="pathway name" value="Transferrin endocytosis and recycling"/>
</dbReference>
<dbReference type="Reactome" id="R-MMU-9639288">
    <property type="pathway name" value="Amino acids regulate mTORC1"/>
</dbReference>
<dbReference type="Reactome" id="R-MMU-983712">
    <property type="pathway name" value="Ion channel transport"/>
</dbReference>
<dbReference type="BioGRID-ORCS" id="110935">
    <property type="hits" value="1 hit in 78 CRISPR screens"/>
</dbReference>
<dbReference type="CD-CODE" id="CE726F99">
    <property type="entry name" value="Postsynaptic density"/>
</dbReference>
<dbReference type="ChiTaRS" id="Atp6v1b1">
    <property type="organism name" value="mouse"/>
</dbReference>
<dbReference type="PRO" id="PR:Q91YH6"/>
<dbReference type="Proteomes" id="UP000000589">
    <property type="component" value="Chromosome 6"/>
</dbReference>
<dbReference type="RNAct" id="Q91YH6">
    <property type="molecule type" value="protein"/>
</dbReference>
<dbReference type="Bgee" id="ENSMUSG00000006269">
    <property type="expression patterns" value="Expressed in vibrissa unit and 130 other cell types or tissues"/>
</dbReference>
<dbReference type="ExpressionAtlas" id="Q91YH6">
    <property type="expression patterns" value="baseline and differential"/>
</dbReference>
<dbReference type="GO" id="GO:0016324">
    <property type="term" value="C:apical plasma membrane"/>
    <property type="evidence" value="ECO:0000314"/>
    <property type="project" value="UniProtKB"/>
</dbReference>
<dbReference type="GO" id="GO:0016323">
    <property type="term" value="C:basolateral plasma membrane"/>
    <property type="evidence" value="ECO:0000314"/>
    <property type="project" value="UniProtKB"/>
</dbReference>
<dbReference type="GO" id="GO:0005737">
    <property type="term" value="C:cytoplasm"/>
    <property type="evidence" value="ECO:0000314"/>
    <property type="project" value="UniProtKB"/>
</dbReference>
<dbReference type="GO" id="GO:0005829">
    <property type="term" value="C:cytosol"/>
    <property type="evidence" value="ECO:0000314"/>
    <property type="project" value="UniProtKB"/>
</dbReference>
<dbReference type="GO" id="GO:0098850">
    <property type="term" value="C:extrinsic component of synaptic vesicle membrane"/>
    <property type="evidence" value="ECO:0007669"/>
    <property type="project" value="Ensembl"/>
</dbReference>
<dbReference type="GO" id="GO:0016328">
    <property type="term" value="C:lateral plasma membrane"/>
    <property type="evidence" value="ECO:0000314"/>
    <property type="project" value="UniProtKB"/>
</dbReference>
<dbReference type="GO" id="GO:0016020">
    <property type="term" value="C:membrane"/>
    <property type="evidence" value="ECO:0000314"/>
    <property type="project" value="MGI"/>
</dbReference>
<dbReference type="GO" id="GO:0005902">
    <property type="term" value="C:microvillus"/>
    <property type="evidence" value="ECO:0000314"/>
    <property type="project" value="UniProtKB"/>
</dbReference>
<dbReference type="GO" id="GO:0016471">
    <property type="term" value="C:vacuolar proton-transporting V-type ATPase complex"/>
    <property type="evidence" value="ECO:0000250"/>
    <property type="project" value="UniProtKB"/>
</dbReference>
<dbReference type="GO" id="GO:0000221">
    <property type="term" value="C:vacuolar proton-transporting V-type ATPase, V1 domain"/>
    <property type="evidence" value="ECO:0000250"/>
    <property type="project" value="UniProtKB"/>
</dbReference>
<dbReference type="GO" id="GO:0005524">
    <property type="term" value="F:ATP binding"/>
    <property type="evidence" value="ECO:0007669"/>
    <property type="project" value="UniProtKB-KW"/>
</dbReference>
<dbReference type="GO" id="GO:0044877">
    <property type="term" value="F:protein-containing complex binding"/>
    <property type="evidence" value="ECO:0007669"/>
    <property type="project" value="Ensembl"/>
</dbReference>
<dbReference type="GO" id="GO:0015078">
    <property type="term" value="F:proton transmembrane transporter activity"/>
    <property type="evidence" value="ECO:0000315"/>
    <property type="project" value="UniProtKB"/>
</dbReference>
<dbReference type="GO" id="GO:0046961">
    <property type="term" value="F:proton-transporting ATPase activity, rotational mechanism"/>
    <property type="evidence" value="ECO:0007669"/>
    <property type="project" value="InterPro"/>
</dbReference>
<dbReference type="GO" id="GO:0030534">
    <property type="term" value="P:adult behavior"/>
    <property type="evidence" value="ECO:0000315"/>
    <property type="project" value="MGI"/>
</dbReference>
<dbReference type="GO" id="GO:0046034">
    <property type="term" value="P:ATP metabolic process"/>
    <property type="evidence" value="ECO:0000315"/>
    <property type="project" value="MGI"/>
</dbReference>
<dbReference type="GO" id="GO:0055074">
    <property type="term" value="P:calcium ion homeostasis"/>
    <property type="evidence" value="ECO:0007669"/>
    <property type="project" value="Ensembl"/>
</dbReference>
<dbReference type="GO" id="GO:0055064">
    <property type="term" value="P:chloride ion homeostasis"/>
    <property type="evidence" value="ECO:0000315"/>
    <property type="project" value="MGI"/>
</dbReference>
<dbReference type="GO" id="GO:0042048">
    <property type="term" value="P:olfactory behavior"/>
    <property type="evidence" value="ECO:0000315"/>
    <property type="project" value="MGI"/>
</dbReference>
<dbReference type="GO" id="GO:0001503">
    <property type="term" value="P:ossification"/>
    <property type="evidence" value="ECO:0000250"/>
    <property type="project" value="UniProtKB"/>
</dbReference>
<dbReference type="GO" id="GO:0045851">
    <property type="term" value="P:pH reduction"/>
    <property type="evidence" value="ECO:0007669"/>
    <property type="project" value="Ensembl"/>
</dbReference>
<dbReference type="GO" id="GO:0055075">
    <property type="term" value="P:potassium ion homeostasis"/>
    <property type="evidence" value="ECO:0000315"/>
    <property type="project" value="MGI"/>
</dbReference>
<dbReference type="GO" id="GO:0006693">
    <property type="term" value="P:prostaglandin metabolic process"/>
    <property type="evidence" value="ECO:0000315"/>
    <property type="project" value="MGI"/>
</dbReference>
<dbReference type="GO" id="GO:1902600">
    <property type="term" value="P:proton transmembrane transport"/>
    <property type="evidence" value="ECO:0000315"/>
    <property type="project" value="UniProtKB"/>
</dbReference>
<dbReference type="GO" id="GO:0010468">
    <property type="term" value="P:regulation of gene expression"/>
    <property type="evidence" value="ECO:0000315"/>
    <property type="project" value="MGI"/>
</dbReference>
<dbReference type="GO" id="GO:0006885">
    <property type="term" value="P:regulation of pH"/>
    <property type="evidence" value="ECO:0000315"/>
    <property type="project" value="UniProtKB"/>
</dbReference>
<dbReference type="GO" id="GO:0035812">
    <property type="term" value="P:renal sodium excretion"/>
    <property type="evidence" value="ECO:0000315"/>
    <property type="project" value="MGI"/>
</dbReference>
<dbReference type="GO" id="GO:0003096">
    <property type="term" value="P:renal sodium ion transport"/>
    <property type="evidence" value="ECO:0000315"/>
    <property type="project" value="MGI"/>
</dbReference>
<dbReference type="GO" id="GO:0003091">
    <property type="term" value="P:renal water homeostasis"/>
    <property type="evidence" value="ECO:0000315"/>
    <property type="project" value="MGI"/>
</dbReference>
<dbReference type="GO" id="GO:0007605">
    <property type="term" value="P:sensory perception of sound"/>
    <property type="evidence" value="ECO:0000266"/>
    <property type="project" value="MGI"/>
</dbReference>
<dbReference type="GO" id="GO:0097401">
    <property type="term" value="P:synaptic vesicle lumen acidification"/>
    <property type="evidence" value="ECO:0000314"/>
    <property type="project" value="SynGO"/>
</dbReference>
<dbReference type="GO" id="GO:0070072">
    <property type="term" value="P:vacuolar proton-transporting V-type ATPase complex assembly"/>
    <property type="evidence" value="ECO:0000250"/>
    <property type="project" value="UniProtKB"/>
</dbReference>
<dbReference type="CDD" id="cd18112">
    <property type="entry name" value="ATP-synt_V_A-type_beta_C"/>
    <property type="match status" value="1"/>
</dbReference>
<dbReference type="CDD" id="cd18118">
    <property type="entry name" value="ATP-synt_V_A-type_beta_N"/>
    <property type="match status" value="1"/>
</dbReference>
<dbReference type="CDD" id="cd01135">
    <property type="entry name" value="V_A-ATPase_B"/>
    <property type="match status" value="1"/>
</dbReference>
<dbReference type="FunFam" id="3.40.50.12240:FF:000001">
    <property type="entry name" value="V-type proton ATPase subunit B, brain"/>
    <property type="match status" value="1"/>
</dbReference>
<dbReference type="Gene3D" id="3.40.50.12240">
    <property type="match status" value="1"/>
</dbReference>
<dbReference type="HAMAP" id="MF_00310">
    <property type="entry name" value="ATP_synth_B_arch"/>
    <property type="match status" value="1"/>
</dbReference>
<dbReference type="InterPro" id="IPR055190">
    <property type="entry name" value="ATP-synt_VA_C"/>
</dbReference>
<dbReference type="InterPro" id="IPR020003">
    <property type="entry name" value="ATPase_a/bsu_AS"/>
</dbReference>
<dbReference type="InterPro" id="IPR004100">
    <property type="entry name" value="ATPase_F1/V1/A1_a/bsu_N"/>
</dbReference>
<dbReference type="InterPro" id="IPR000194">
    <property type="entry name" value="ATPase_F1/V1/A1_a/bsu_nucl-bd"/>
</dbReference>
<dbReference type="InterPro" id="IPR005723">
    <property type="entry name" value="ATPase_V1-cplx_bsu"/>
</dbReference>
<dbReference type="InterPro" id="IPR027417">
    <property type="entry name" value="P-loop_NTPase"/>
</dbReference>
<dbReference type="InterPro" id="IPR022879">
    <property type="entry name" value="V-ATPase_su_B/beta"/>
</dbReference>
<dbReference type="NCBIfam" id="NF003235">
    <property type="entry name" value="PRK04196.1"/>
    <property type="match status" value="1"/>
</dbReference>
<dbReference type="NCBIfam" id="TIGR01040">
    <property type="entry name" value="V-ATPase_V1_B"/>
    <property type="match status" value="1"/>
</dbReference>
<dbReference type="PANTHER" id="PTHR43389">
    <property type="entry name" value="V-TYPE PROTON ATPASE SUBUNIT B"/>
    <property type="match status" value="1"/>
</dbReference>
<dbReference type="PANTHER" id="PTHR43389:SF1">
    <property type="entry name" value="V-TYPE PROTON ATPASE SUBUNIT B, KIDNEY ISOFORM"/>
    <property type="match status" value="1"/>
</dbReference>
<dbReference type="Pfam" id="PF00006">
    <property type="entry name" value="ATP-synt_ab"/>
    <property type="match status" value="1"/>
</dbReference>
<dbReference type="Pfam" id="PF02874">
    <property type="entry name" value="ATP-synt_ab_N"/>
    <property type="match status" value="1"/>
</dbReference>
<dbReference type="Pfam" id="PF22919">
    <property type="entry name" value="ATP-synt_VA_C"/>
    <property type="match status" value="1"/>
</dbReference>
<dbReference type="PIRSF" id="PIRSF039114">
    <property type="entry name" value="V-ATPsynth_beta/V-ATPase_B"/>
    <property type="match status" value="1"/>
</dbReference>
<dbReference type="SUPFAM" id="SSF52540">
    <property type="entry name" value="P-loop containing nucleoside triphosphate hydrolases"/>
    <property type="match status" value="1"/>
</dbReference>
<dbReference type="PROSITE" id="PS00152">
    <property type="entry name" value="ATPASE_ALPHA_BETA"/>
    <property type="match status" value="1"/>
</dbReference>
<sequence length="513" mass="56791">MATTVDSRSSGFTGNSCDPGTAQEHVQAVTRNYITHPRVTYRTVCSVNGPLVVLDQVKFAQYAEIVNFTLPDGTQRSGQVLEVAGTKAIVQVFEGTSGIDSQKTTCEFTGDILRTPVSEDMLGRIFNGSGKPIDKGPAVMAEEFLDINGQPINPHDRIYPEEMIQTGISPIDVMNSIARGQKIPIFSAAGLPHNEIAAQICRQAGLVKKSKAVLDYHEDNFAIVFAAMGVNMETARFFKSDFEQNGTMGNVCLFLNLANDPTIERIITPRLALTTAEFLAYQCEKHVLVILTDMSSYAEALREVSAAREEVPGRRGFPGYMYTDLATIYERAGRVEGRGGSITQIPILTMPNDDITHPIPDLTGFITEGQIYVDRQLHNRQVYPPINVLPSLSRLMKSAIGEGMTRKDHGDVSNQLYACYAIGKDVQAMKAVVGEEALTSEDLLYLEFLQKFEKNFITQGPYENRTVFESLDLGWKLLRIFPKEMLKRIPQSMTDEFYSRQGAQQDPASDTAL</sequence>
<organism>
    <name type="scientific">Mus musculus</name>
    <name type="common">Mouse</name>
    <dbReference type="NCBI Taxonomy" id="10090"/>
    <lineage>
        <taxon>Eukaryota</taxon>
        <taxon>Metazoa</taxon>
        <taxon>Chordata</taxon>
        <taxon>Craniata</taxon>
        <taxon>Vertebrata</taxon>
        <taxon>Euteleostomi</taxon>
        <taxon>Mammalia</taxon>
        <taxon>Eutheria</taxon>
        <taxon>Euarchontoglires</taxon>
        <taxon>Glires</taxon>
        <taxon>Rodentia</taxon>
        <taxon>Myomorpha</taxon>
        <taxon>Muroidea</taxon>
        <taxon>Muridae</taxon>
        <taxon>Murinae</taxon>
        <taxon>Mus</taxon>
        <taxon>Mus</taxon>
    </lineage>
</organism>
<accession>Q91YH6</accession>
<accession>Q6P6I3</accession>
<accession>Q8C3L6</accession>
<feature type="chain" id="PRO_0000453034" description="V-type proton ATPase subunit B, kidney isoform">
    <location>
        <begin position="1"/>
        <end position="513"/>
    </location>
</feature>
<feature type="region of interest" description="Disordered" evidence="3">
    <location>
        <begin position="1"/>
        <end position="21"/>
    </location>
</feature>
<feature type="short sequence motif" description="PDZ-binding" evidence="1">
    <location>
        <begin position="510"/>
        <end position="513"/>
    </location>
</feature>
<feature type="compositionally biased region" description="Polar residues" evidence="3">
    <location>
        <begin position="1"/>
        <end position="18"/>
    </location>
</feature>
<feature type="binding site" evidence="2">
    <location>
        <position position="394"/>
    </location>
    <ligand>
        <name>ATP</name>
        <dbReference type="ChEBI" id="CHEBI:30616"/>
    </ligand>
</feature>
<feature type="sequence conflict" description="In Ref. 4; AAH62202." evidence="8" ref="4">
    <location>
        <position position="7"/>
    </location>
</feature>
<feature type="sequence conflict" description="In Ref. 2; BAC39470." evidence="8" ref="2">
    <original>G</original>
    <variation>V</variation>
    <location>
        <position position="73"/>
    </location>
</feature>
<name>VATB1_MOUSE</name>
<evidence type="ECO:0000250" key="1">
    <source>
        <dbReference type="UniProtKB" id="P15313"/>
    </source>
</evidence>
<evidence type="ECO:0000250" key="2">
    <source>
        <dbReference type="UniProtKB" id="P21281"/>
    </source>
</evidence>
<evidence type="ECO:0000256" key="3">
    <source>
        <dbReference type="SAM" id="MobiDB-lite"/>
    </source>
</evidence>
<evidence type="ECO:0000269" key="4">
    <source>
    </source>
</evidence>
<evidence type="ECO:0000269" key="5">
    <source>
    </source>
</evidence>
<evidence type="ECO:0000269" key="6">
    <source>
    </source>
</evidence>
<evidence type="ECO:0000269" key="7">
    <source>
    </source>
</evidence>
<evidence type="ECO:0000305" key="8"/>
<reference key="1">
    <citation type="journal article" date="2003" name="Gene">
        <title>Molecular cloning and characterization of Atp6v1b1, the murine vacuolar H+ -ATPase B1-subunit.</title>
        <authorList>
            <person name="Finberg K.E."/>
            <person name="Wagner C.A."/>
            <person name="Stehberger P.A."/>
            <person name="Geibel J.P."/>
            <person name="Lifton R.P."/>
        </authorList>
    </citation>
    <scope>NUCLEOTIDE SEQUENCE [GENOMIC DNA / MRNA]</scope>
    <scope>TISSUE SPECIFICITY</scope>
    <source>
        <tissue>Kidney</tissue>
    </source>
</reference>
<reference key="2">
    <citation type="journal article" date="2005" name="Science">
        <title>The transcriptional landscape of the mammalian genome.</title>
        <authorList>
            <person name="Carninci P."/>
            <person name="Kasukawa T."/>
            <person name="Katayama S."/>
            <person name="Gough J."/>
            <person name="Frith M.C."/>
            <person name="Maeda N."/>
            <person name="Oyama R."/>
            <person name="Ravasi T."/>
            <person name="Lenhard B."/>
            <person name="Wells C."/>
            <person name="Kodzius R."/>
            <person name="Shimokawa K."/>
            <person name="Bajic V.B."/>
            <person name="Brenner S.E."/>
            <person name="Batalov S."/>
            <person name="Forrest A.R."/>
            <person name="Zavolan M."/>
            <person name="Davis M.J."/>
            <person name="Wilming L.G."/>
            <person name="Aidinis V."/>
            <person name="Allen J.E."/>
            <person name="Ambesi-Impiombato A."/>
            <person name="Apweiler R."/>
            <person name="Aturaliya R.N."/>
            <person name="Bailey T.L."/>
            <person name="Bansal M."/>
            <person name="Baxter L."/>
            <person name="Beisel K.W."/>
            <person name="Bersano T."/>
            <person name="Bono H."/>
            <person name="Chalk A.M."/>
            <person name="Chiu K.P."/>
            <person name="Choudhary V."/>
            <person name="Christoffels A."/>
            <person name="Clutterbuck D.R."/>
            <person name="Crowe M.L."/>
            <person name="Dalla E."/>
            <person name="Dalrymple B.P."/>
            <person name="de Bono B."/>
            <person name="Della Gatta G."/>
            <person name="di Bernardo D."/>
            <person name="Down T."/>
            <person name="Engstrom P."/>
            <person name="Fagiolini M."/>
            <person name="Faulkner G."/>
            <person name="Fletcher C.F."/>
            <person name="Fukushima T."/>
            <person name="Furuno M."/>
            <person name="Futaki S."/>
            <person name="Gariboldi M."/>
            <person name="Georgii-Hemming P."/>
            <person name="Gingeras T.R."/>
            <person name="Gojobori T."/>
            <person name="Green R.E."/>
            <person name="Gustincich S."/>
            <person name="Harbers M."/>
            <person name="Hayashi Y."/>
            <person name="Hensch T.K."/>
            <person name="Hirokawa N."/>
            <person name="Hill D."/>
            <person name="Huminiecki L."/>
            <person name="Iacono M."/>
            <person name="Ikeo K."/>
            <person name="Iwama A."/>
            <person name="Ishikawa T."/>
            <person name="Jakt M."/>
            <person name="Kanapin A."/>
            <person name="Katoh M."/>
            <person name="Kawasawa Y."/>
            <person name="Kelso J."/>
            <person name="Kitamura H."/>
            <person name="Kitano H."/>
            <person name="Kollias G."/>
            <person name="Krishnan S.P."/>
            <person name="Kruger A."/>
            <person name="Kummerfeld S.K."/>
            <person name="Kurochkin I.V."/>
            <person name="Lareau L.F."/>
            <person name="Lazarevic D."/>
            <person name="Lipovich L."/>
            <person name="Liu J."/>
            <person name="Liuni S."/>
            <person name="McWilliam S."/>
            <person name="Madan Babu M."/>
            <person name="Madera M."/>
            <person name="Marchionni L."/>
            <person name="Matsuda H."/>
            <person name="Matsuzawa S."/>
            <person name="Miki H."/>
            <person name="Mignone F."/>
            <person name="Miyake S."/>
            <person name="Morris K."/>
            <person name="Mottagui-Tabar S."/>
            <person name="Mulder N."/>
            <person name="Nakano N."/>
            <person name="Nakauchi H."/>
            <person name="Ng P."/>
            <person name="Nilsson R."/>
            <person name="Nishiguchi S."/>
            <person name="Nishikawa S."/>
            <person name="Nori F."/>
            <person name="Ohara O."/>
            <person name="Okazaki Y."/>
            <person name="Orlando V."/>
            <person name="Pang K.C."/>
            <person name="Pavan W.J."/>
            <person name="Pavesi G."/>
            <person name="Pesole G."/>
            <person name="Petrovsky N."/>
            <person name="Piazza S."/>
            <person name="Reed J."/>
            <person name="Reid J.F."/>
            <person name="Ring B.Z."/>
            <person name="Ringwald M."/>
            <person name="Rost B."/>
            <person name="Ruan Y."/>
            <person name="Salzberg S.L."/>
            <person name="Sandelin A."/>
            <person name="Schneider C."/>
            <person name="Schoenbach C."/>
            <person name="Sekiguchi K."/>
            <person name="Semple C.A."/>
            <person name="Seno S."/>
            <person name="Sessa L."/>
            <person name="Sheng Y."/>
            <person name="Shibata Y."/>
            <person name="Shimada H."/>
            <person name="Shimada K."/>
            <person name="Silva D."/>
            <person name="Sinclair B."/>
            <person name="Sperling S."/>
            <person name="Stupka E."/>
            <person name="Sugiura K."/>
            <person name="Sultana R."/>
            <person name="Takenaka Y."/>
            <person name="Taki K."/>
            <person name="Tammoja K."/>
            <person name="Tan S.L."/>
            <person name="Tang S."/>
            <person name="Taylor M.S."/>
            <person name="Tegner J."/>
            <person name="Teichmann S.A."/>
            <person name="Ueda H.R."/>
            <person name="van Nimwegen E."/>
            <person name="Verardo R."/>
            <person name="Wei C.L."/>
            <person name="Yagi K."/>
            <person name="Yamanishi H."/>
            <person name="Zabarovsky E."/>
            <person name="Zhu S."/>
            <person name="Zimmer A."/>
            <person name="Hide W."/>
            <person name="Bult C."/>
            <person name="Grimmond S.M."/>
            <person name="Teasdale R.D."/>
            <person name="Liu E.T."/>
            <person name="Brusic V."/>
            <person name="Quackenbush J."/>
            <person name="Wahlestedt C."/>
            <person name="Mattick J.S."/>
            <person name="Hume D.A."/>
            <person name="Kai C."/>
            <person name="Sasaki D."/>
            <person name="Tomaru Y."/>
            <person name="Fukuda S."/>
            <person name="Kanamori-Katayama M."/>
            <person name="Suzuki M."/>
            <person name="Aoki J."/>
            <person name="Arakawa T."/>
            <person name="Iida J."/>
            <person name="Imamura K."/>
            <person name="Itoh M."/>
            <person name="Kato T."/>
            <person name="Kawaji H."/>
            <person name="Kawagashira N."/>
            <person name="Kawashima T."/>
            <person name="Kojima M."/>
            <person name="Kondo S."/>
            <person name="Konno H."/>
            <person name="Nakano K."/>
            <person name="Ninomiya N."/>
            <person name="Nishio T."/>
            <person name="Okada M."/>
            <person name="Plessy C."/>
            <person name="Shibata K."/>
            <person name="Shiraki T."/>
            <person name="Suzuki S."/>
            <person name="Tagami M."/>
            <person name="Waki K."/>
            <person name="Watahiki A."/>
            <person name="Okamura-Oho Y."/>
            <person name="Suzuki H."/>
            <person name="Kawai J."/>
            <person name="Hayashizaki Y."/>
        </authorList>
    </citation>
    <scope>NUCLEOTIDE SEQUENCE [LARGE SCALE MRNA]</scope>
    <source>
        <strain>C57BL/6J</strain>
        <tissue>Kidney</tissue>
        <tissue>Lung</tissue>
    </source>
</reference>
<reference key="3">
    <citation type="journal article" date="2009" name="PLoS Biol.">
        <title>Lineage-specific biology revealed by a finished genome assembly of the mouse.</title>
        <authorList>
            <person name="Church D.M."/>
            <person name="Goodstadt L."/>
            <person name="Hillier L.W."/>
            <person name="Zody M.C."/>
            <person name="Goldstein S."/>
            <person name="She X."/>
            <person name="Bult C.J."/>
            <person name="Agarwala R."/>
            <person name="Cherry J.L."/>
            <person name="DiCuccio M."/>
            <person name="Hlavina W."/>
            <person name="Kapustin Y."/>
            <person name="Meric P."/>
            <person name="Maglott D."/>
            <person name="Birtle Z."/>
            <person name="Marques A.C."/>
            <person name="Graves T."/>
            <person name="Zhou S."/>
            <person name="Teague B."/>
            <person name="Potamousis K."/>
            <person name="Churas C."/>
            <person name="Place M."/>
            <person name="Herschleb J."/>
            <person name="Runnheim R."/>
            <person name="Forrest D."/>
            <person name="Amos-Landgraf J."/>
            <person name="Schwartz D.C."/>
            <person name="Cheng Z."/>
            <person name="Lindblad-Toh K."/>
            <person name="Eichler E.E."/>
            <person name="Ponting C.P."/>
        </authorList>
    </citation>
    <scope>NUCLEOTIDE SEQUENCE [LARGE SCALE GENOMIC DNA]</scope>
    <source>
        <strain>C57BL/6J</strain>
    </source>
</reference>
<reference key="4">
    <citation type="journal article" date="2004" name="Genome Res.">
        <title>The status, quality, and expansion of the NIH full-length cDNA project: the Mammalian Gene Collection (MGC).</title>
        <authorList>
            <consortium name="The MGC Project Team"/>
        </authorList>
    </citation>
    <scope>NUCLEOTIDE SEQUENCE [LARGE SCALE MRNA]</scope>
    <source>
        <strain>Czech II</strain>
        <strain>FVB/N</strain>
        <tissue>Mammary tumor</tissue>
    </source>
</reference>
<reference key="5">
    <citation type="journal article" date="2005" name="Proc. Natl. Acad. Sci. U.S.A.">
        <title>The B1-subunit of the H(+) ATPase is required for maximal urinary acidification.</title>
        <authorList>
            <person name="Finberg K.E."/>
            <person name="Wagner C.A."/>
            <person name="Bailey M.A."/>
            <person name="Paunescu T.G."/>
            <person name="Breton S."/>
            <person name="Brown D."/>
            <person name="Giebisch G."/>
            <person name="Geibel J.P."/>
            <person name="Lifton R.P."/>
        </authorList>
    </citation>
    <scope>FUNCTION</scope>
    <scope>DISRUPTION PHENOTYPE</scope>
    <scope>TISSUE SPECIFICITY</scope>
</reference>
<reference key="6">
    <citation type="journal article" date="2010" name="Cell">
        <title>A tissue-specific atlas of mouse protein phosphorylation and expression.</title>
        <authorList>
            <person name="Huttlin E.L."/>
            <person name="Jedrychowski M.P."/>
            <person name="Elias J.E."/>
            <person name="Goswami T."/>
            <person name="Rad R."/>
            <person name="Beausoleil S.A."/>
            <person name="Villen J."/>
            <person name="Haas W."/>
            <person name="Sowa M.E."/>
            <person name="Gygi S.P."/>
        </authorList>
    </citation>
    <scope>IDENTIFICATION BY MASS SPECTROMETRY [LARGE SCALE ANALYSIS]</scope>
</reference>
<reference key="7">
    <citation type="journal article" date="2012" name="PLoS ONE">
        <title>Loss of the V-ATPase B1 subunit isoform expressed in non-neuronal cells of the mouse olfactory epithelium impairs olfactory function.</title>
        <authorList>
            <person name="Paunescu T.G."/>
            <person name="Rodriguez S."/>
            <person name="Benz E."/>
            <person name="McKee M."/>
            <person name="Tyszkowski R."/>
            <person name="Albers M.W."/>
            <person name="Brown D."/>
        </authorList>
    </citation>
    <scope>FUNCTION</scope>
    <scope>DISRUPTION PHENOTYPE</scope>
    <scope>SUBCELLULAR LOCATION</scope>
    <scope>TISSUE SPECIFICITY</scope>
</reference>
<reference key="8">
    <citation type="journal article" date="2018" name="Am. J. Physiol.">
        <title>H+-ATPase B1 subunit localizes to thick ascending limb and distal convoluted tubule of rodent and human kidney.</title>
        <authorList>
            <person name="Frische S."/>
            <person name="Chambrey R."/>
            <person name="Trepiccione F."/>
            <person name="Zamani R."/>
            <person name="Marcussen N."/>
            <person name="Alexander R.T."/>
            <person name="Skjoedt K."/>
            <person name="Svenningsen P."/>
            <person name="Dimke H."/>
        </authorList>
    </citation>
    <scope>SUBCELLULAR LOCATION</scope>
    <scope>TISSUE SPECIFICITY</scope>
</reference>
<keyword id="KW-0067">ATP-binding</keyword>
<keyword id="KW-1003">Cell membrane</keyword>
<keyword id="KW-0375">Hydrogen ion transport</keyword>
<keyword id="KW-0406">Ion transport</keyword>
<keyword id="KW-0472">Membrane</keyword>
<keyword id="KW-0547">Nucleotide-binding</keyword>
<keyword id="KW-1185">Reference proteome</keyword>
<keyword id="KW-0813">Transport</keyword>